<reference key="1">
    <citation type="journal article" date="1994" name="Nature">
        <title>2.2 Mb of contiguous nucleotide sequence from chromosome III of C. elegans.</title>
        <authorList>
            <person name="Wilson R."/>
            <person name="Ainscough R."/>
            <person name="Anderson K."/>
            <person name="Baynes C."/>
            <person name="Berks M."/>
            <person name="Bonfield J."/>
            <person name="Burton J."/>
            <person name="Connell M."/>
            <person name="Copsey T."/>
            <person name="Cooper J."/>
            <person name="Coulson A."/>
            <person name="Craxton M."/>
            <person name="Dear S."/>
            <person name="Du Z."/>
            <person name="Durbin R."/>
            <person name="Favello A."/>
            <person name="Fraser A."/>
            <person name="Fulton L."/>
            <person name="Gardner A."/>
            <person name="Green P."/>
            <person name="Hawkins T."/>
            <person name="Hillier L."/>
            <person name="Jier M."/>
            <person name="Johnston L."/>
            <person name="Jones M."/>
            <person name="Kershaw J."/>
            <person name="Kirsten J."/>
            <person name="Laisster N."/>
            <person name="Latreille P."/>
            <person name="Lightning J."/>
            <person name="Lloyd C."/>
            <person name="Mortimore B."/>
            <person name="O'Callaghan M."/>
            <person name="Parsons J."/>
            <person name="Percy C."/>
            <person name="Rifken L."/>
            <person name="Roopra A."/>
            <person name="Saunders D."/>
            <person name="Shownkeen R."/>
            <person name="Sims M."/>
            <person name="Smaldon N."/>
            <person name="Smith A."/>
            <person name="Smith M."/>
            <person name="Sonnhammer E."/>
            <person name="Staden R."/>
            <person name="Sulston J."/>
            <person name="Thierry-Mieg J."/>
            <person name="Thomas K."/>
            <person name="Vaudin M."/>
            <person name="Vaughan K."/>
            <person name="Waterston R."/>
            <person name="Watson A."/>
            <person name="Weinstock L."/>
            <person name="Wilkinson-Sproat J."/>
            <person name="Wohldman P."/>
        </authorList>
    </citation>
    <scope>NUCLEOTIDE SEQUENCE [LARGE SCALE GENOMIC DNA]</scope>
    <source>
        <strain>Bristol N2</strain>
    </source>
</reference>
<reference key="2">
    <citation type="journal article" date="1998" name="Science">
        <title>Genome sequence of the nematode C. elegans: a platform for investigating biology.</title>
        <authorList>
            <consortium name="The C. elegans sequencing consortium"/>
        </authorList>
    </citation>
    <scope>NUCLEOTIDE SEQUENCE [LARGE SCALE GENOMIC DNA]</scope>
    <source>
        <strain>Bristol N2</strain>
    </source>
</reference>
<proteinExistence type="inferred from homology"/>
<comment type="function">
    <text evidence="1">mRNA-binding protein involved in proper cytoplasmic distribution of mitochondria.</text>
</comment>
<comment type="subcellular location">
    <subcellularLocation>
        <location evidence="1">Cytoplasm</location>
    </subcellularLocation>
</comment>
<comment type="similarity">
    <text evidence="1">Belongs to the CLU family.</text>
</comment>
<dbReference type="EMBL" id="Z27080">
    <property type="protein sequence ID" value="CAA81605.1"/>
    <property type="molecule type" value="Genomic_DNA"/>
</dbReference>
<dbReference type="EMBL" id="Z22176">
    <property type="protein sequence ID" value="CAA81605.1"/>
    <property type="status" value="JOINED"/>
    <property type="molecule type" value="Genomic_DNA"/>
</dbReference>
<dbReference type="PIR" id="E88557">
    <property type="entry name" value="E88557"/>
</dbReference>
<dbReference type="PIR" id="S40989">
    <property type="entry name" value="S40989"/>
</dbReference>
<dbReference type="RefSeq" id="NP_499097.1">
    <property type="nucleotide sequence ID" value="NM_066696.9"/>
</dbReference>
<dbReference type="SMR" id="P34466"/>
<dbReference type="BioGRID" id="41537">
    <property type="interactions" value="7"/>
</dbReference>
<dbReference type="FunCoup" id="P34466">
    <property type="interactions" value="2575"/>
</dbReference>
<dbReference type="STRING" id="6239.F55H2.6.1"/>
<dbReference type="PaxDb" id="6239-F55H2.6"/>
<dbReference type="PeptideAtlas" id="P34466"/>
<dbReference type="EnsemblMetazoa" id="F55H2.6.1">
    <property type="protein sequence ID" value="F55H2.6.1"/>
    <property type="gene ID" value="WBGene00000550"/>
</dbReference>
<dbReference type="GeneID" id="176341"/>
<dbReference type="KEGG" id="cel:CELE_F55H2.6"/>
<dbReference type="UCSC" id="F55H2.6.1">
    <property type="organism name" value="c. elegans"/>
</dbReference>
<dbReference type="AGR" id="WB:WBGene00000550"/>
<dbReference type="CTD" id="176341"/>
<dbReference type="WormBase" id="F55H2.6">
    <property type="protein sequence ID" value="CE00213"/>
    <property type="gene ID" value="WBGene00000550"/>
    <property type="gene designation" value="clu-1"/>
</dbReference>
<dbReference type="eggNOG" id="KOG1839">
    <property type="taxonomic scope" value="Eukaryota"/>
</dbReference>
<dbReference type="GeneTree" id="ENSGT00390000012485"/>
<dbReference type="HOGENOM" id="CLU_003256_1_0_1"/>
<dbReference type="InParanoid" id="P34466"/>
<dbReference type="OMA" id="DMAQCMR"/>
<dbReference type="OrthoDB" id="1414216at2759"/>
<dbReference type="PhylomeDB" id="P34466"/>
<dbReference type="PRO" id="PR:P34466"/>
<dbReference type="Proteomes" id="UP000001940">
    <property type="component" value="Chromosome III"/>
</dbReference>
<dbReference type="Bgee" id="WBGene00000550">
    <property type="expression patterns" value="Expressed in germ line (C elegans) and 4 other cell types or tissues"/>
</dbReference>
<dbReference type="GO" id="GO:0005737">
    <property type="term" value="C:cytoplasm"/>
    <property type="evidence" value="ECO:0000318"/>
    <property type="project" value="GO_Central"/>
</dbReference>
<dbReference type="GO" id="GO:0003729">
    <property type="term" value="F:mRNA binding"/>
    <property type="evidence" value="ECO:0000318"/>
    <property type="project" value="GO_Central"/>
</dbReference>
<dbReference type="GO" id="GO:0048312">
    <property type="term" value="P:intracellular distribution of mitochondria"/>
    <property type="evidence" value="ECO:0000318"/>
    <property type="project" value="GO_Central"/>
</dbReference>
<dbReference type="GO" id="GO:0007005">
    <property type="term" value="P:mitochondrion organization"/>
    <property type="evidence" value="ECO:0007669"/>
    <property type="project" value="UniProtKB-UniRule"/>
</dbReference>
<dbReference type="CDD" id="cd15466">
    <property type="entry name" value="CLU-central"/>
    <property type="match status" value="1"/>
</dbReference>
<dbReference type="FunFam" id="1.25.40.10:FF:001515">
    <property type="entry name" value="Clustered mitochondria protein homolog"/>
    <property type="match status" value="1"/>
</dbReference>
<dbReference type="FunFam" id="3.30.2280.10:FF:000002">
    <property type="entry name" value="Clustered mitochondria protein homolog"/>
    <property type="match status" value="1"/>
</dbReference>
<dbReference type="Gene3D" id="3.30.2280.10">
    <property type="entry name" value="Hypothetical protein (hspc210)"/>
    <property type="match status" value="1"/>
</dbReference>
<dbReference type="Gene3D" id="1.25.40.10">
    <property type="entry name" value="Tetratricopeptide repeat domain"/>
    <property type="match status" value="1"/>
</dbReference>
<dbReference type="HAMAP" id="MF_03013">
    <property type="entry name" value="CLU"/>
    <property type="match status" value="1"/>
</dbReference>
<dbReference type="InterPro" id="IPR033646">
    <property type="entry name" value="CLU-central"/>
</dbReference>
<dbReference type="InterPro" id="IPR025697">
    <property type="entry name" value="CLU_dom"/>
</dbReference>
<dbReference type="InterPro" id="IPR028275">
    <property type="entry name" value="CLU_N"/>
</dbReference>
<dbReference type="InterPro" id="IPR027523">
    <property type="entry name" value="CLU_prot"/>
</dbReference>
<dbReference type="InterPro" id="IPR007967">
    <property type="entry name" value="GSKIP_dom"/>
</dbReference>
<dbReference type="InterPro" id="IPR023231">
    <property type="entry name" value="GSKIP_dom_sf"/>
</dbReference>
<dbReference type="InterPro" id="IPR011990">
    <property type="entry name" value="TPR-like_helical_dom_sf"/>
</dbReference>
<dbReference type="PANTHER" id="PTHR12601:SF6">
    <property type="entry name" value="CLUSTERED MITOCHONDRIA PROTEIN HOMOLOG"/>
    <property type="match status" value="1"/>
</dbReference>
<dbReference type="PANTHER" id="PTHR12601">
    <property type="entry name" value="EUKARYOTIC TRANSLATION INITIATION FACTOR 3 SUBUNIT EIF-3"/>
    <property type="match status" value="1"/>
</dbReference>
<dbReference type="Pfam" id="PF13236">
    <property type="entry name" value="CLU"/>
    <property type="match status" value="1"/>
</dbReference>
<dbReference type="Pfam" id="PF15044">
    <property type="entry name" value="CLU_N"/>
    <property type="match status" value="1"/>
</dbReference>
<dbReference type="Pfam" id="PF12807">
    <property type="entry name" value="eIF3_p135"/>
    <property type="match status" value="1"/>
</dbReference>
<dbReference type="Pfam" id="PF05303">
    <property type="entry name" value="GSKIP_dom"/>
    <property type="match status" value="1"/>
</dbReference>
<dbReference type="Pfam" id="PF13374">
    <property type="entry name" value="TPR_10"/>
    <property type="match status" value="1"/>
</dbReference>
<dbReference type="SUPFAM" id="SSF103107">
    <property type="entry name" value="Hypothetical protein c14orf129, hspc210"/>
    <property type="match status" value="1"/>
</dbReference>
<dbReference type="SUPFAM" id="SSF48452">
    <property type="entry name" value="TPR-like"/>
    <property type="match status" value="1"/>
</dbReference>
<dbReference type="PROSITE" id="PS51823">
    <property type="entry name" value="CLU"/>
    <property type="match status" value="1"/>
</dbReference>
<protein>
    <recommendedName>
        <fullName evidence="1">Clustered mitochondria protein homolog</fullName>
    </recommendedName>
</protein>
<keyword id="KW-0963">Cytoplasm</keyword>
<keyword id="KW-1185">Reference proteome</keyword>
<evidence type="ECO:0000255" key="1">
    <source>
        <dbReference type="HAMAP-Rule" id="MF_03013"/>
    </source>
</evidence>
<evidence type="ECO:0000255" key="2">
    <source>
        <dbReference type="PROSITE-ProRule" id="PRU01167"/>
    </source>
</evidence>
<evidence type="ECO:0000256" key="3">
    <source>
        <dbReference type="SAM" id="MobiDB-lite"/>
    </source>
</evidence>
<feature type="chain" id="PRO_0000123554" description="Clustered mitochondria protein homolog">
    <location>
        <begin position="1"/>
        <end position="1247"/>
    </location>
</feature>
<feature type="domain" description="Clu" evidence="2">
    <location>
        <begin position="329"/>
        <end position="579"/>
    </location>
</feature>
<feature type="region of interest" description="Disordered" evidence="3">
    <location>
        <begin position="1"/>
        <end position="43"/>
    </location>
</feature>
<feature type="region of interest" description="Disordered" evidence="3">
    <location>
        <begin position="1222"/>
        <end position="1247"/>
    </location>
</feature>
<feature type="compositionally biased region" description="Polar residues" evidence="3">
    <location>
        <begin position="30"/>
        <end position="39"/>
    </location>
</feature>
<gene>
    <name evidence="1" type="primary">clu-1</name>
    <name type="ORF">F55H2.6</name>
</gene>
<name>CLU_CAEEL</name>
<sequence>MTLGSETKTDVEVPIINGKHEIPQEENDSGHSSINTPDSSEPDKQVDKFVKITIQPSCGDAFELHLSDNELVQELYQTLLDREATCHRTCFSLYLNGTAVDNYSEVRAIPGFVDGCTLNVVDEPYTIRDARLHLRQVRELLKFGLTEDQHEPPCTNDAQSYLTTINLQPEEKKEPKPSDILPPDHALPGCKERSLAHLLVPQPKELIALKDIAFSPYNPPPGPRKLRGDVLYIDITTVENRIYHVTCCTRGFYVNNSQDGRFDPTVSNSNKTVYQSVIELLQNVSPGFKKVYPQILKRRQEKTLVERLPTSYPVSSWVGNPLKTDGYMSDSLRAIELTEPFRVGFEDHMPGLLRDWNEELQTTFEMTRKSISERVIRDRSYYKIHADYVNAAARGVQSILDGNILAINPGEDKKTHMYIWNNIFFSLGFDVRDHYKELGGDAAAFAATSTDLQGVRAFATLDDPKLNTLGMAIFDYRGYRVTAQSIIPGILEREQEQSVVYGSIDFGKTVVSDEKYHELLEDAAHKLKMLPHTVISEKDGVKEELKLYTSYEAKGIIGNDGRKYVLDLLRSMPPDVHYLDDAEVSEAAKTLGYPRKFPHKLSALRRELIDAFCESRLVTFIQLTAKKIRDLITESKEKNDETLIKQAAEAETELSLLFMAISEDKEFEAKNKVVQDAIKEACAVVHSIYEDRYVMKFNPDCFSSNVKHAPTENLERQRRVVVDAADFLLTQKIPELVQNLKDCVVQPIDGDNLADIMHINGINIRYLGEIGKRLENSVSFARPLVLSDIVARSAKHVIRKINVQITADQLSASTSHILNCLFSVVLDPSPIAANVAKKANKKNGKKRVTSAWSSLTTSALWNSIREDSASYYGYPIEADSLEKFTELHDIQKTALFRRICKVMGVQLVARDYQLDNSTAKKTSIFVEDDIINFFPIIKHHEPFTADAKKMFIRGQQAMSIGASREAYECIGESLNLMTLVYGVMHPDMPQCLRALARLSHVLGETGDALNNQHKAAVMSERLIGLDAGNTIIEYINLAHFAFGALLIPGSLRPLYRARYLMNLVFGEKHPVMAQIDANIGLILFTVQEFDTALKYLQSADAITKTIGEPRKLKTGLISNLIARTHAARGDFRAALVAEKETFAIYSELYGPNHPRVNESSEYLRTLTQQAVTFQKKMLKLDNSTNITELFQAQPPTVTSLFDTLNIINGILIIGVPGLSSLGKQQNGTTEESKTTDVAAQLDNETLD</sequence>
<organism>
    <name type="scientific">Caenorhabditis elegans</name>
    <dbReference type="NCBI Taxonomy" id="6239"/>
    <lineage>
        <taxon>Eukaryota</taxon>
        <taxon>Metazoa</taxon>
        <taxon>Ecdysozoa</taxon>
        <taxon>Nematoda</taxon>
        <taxon>Chromadorea</taxon>
        <taxon>Rhabditida</taxon>
        <taxon>Rhabditina</taxon>
        <taxon>Rhabditomorpha</taxon>
        <taxon>Rhabditoidea</taxon>
        <taxon>Rhabditidae</taxon>
        <taxon>Peloderinae</taxon>
        <taxon>Caenorhabditis</taxon>
    </lineage>
</organism>
<accession>P34466</accession>